<accession>Q57685</accession>
<protein>
    <recommendedName>
        <fullName>Uncharacterized protein MJ0233</fullName>
    </recommendedName>
</protein>
<evidence type="ECO:0000255" key="1"/>
<evidence type="ECO:0000305" key="2"/>
<gene>
    <name type="ordered locus">MJ0233</name>
</gene>
<name>Y233_METJA</name>
<comment type="subcellular location">
    <subcellularLocation>
        <location evidence="2">Cell membrane</location>
        <topology evidence="2">Multi-pass membrane protein</topology>
    </subcellularLocation>
</comment>
<comment type="similarity">
    <text evidence="2">To M.jannaschii MJ1189.</text>
</comment>
<dbReference type="EMBL" id="L77117">
    <property type="protein sequence ID" value="AAB98226.1"/>
    <property type="molecule type" value="Genomic_DNA"/>
</dbReference>
<dbReference type="PIR" id="B64329">
    <property type="entry name" value="B64329"/>
</dbReference>
<dbReference type="RefSeq" id="WP_010869731.1">
    <property type="nucleotide sequence ID" value="NC_000909.1"/>
</dbReference>
<dbReference type="STRING" id="243232.MJ_0233"/>
<dbReference type="PaxDb" id="243232-MJ_0233"/>
<dbReference type="EnsemblBacteria" id="AAB98226">
    <property type="protein sequence ID" value="AAB98226"/>
    <property type="gene ID" value="MJ_0233"/>
</dbReference>
<dbReference type="GeneID" id="1451086"/>
<dbReference type="KEGG" id="mja:MJ_0233"/>
<dbReference type="eggNOG" id="arCOG02880">
    <property type="taxonomic scope" value="Archaea"/>
</dbReference>
<dbReference type="HOGENOM" id="CLU_083802_0_0_2"/>
<dbReference type="InParanoid" id="Q57685"/>
<dbReference type="OrthoDB" id="60637at2157"/>
<dbReference type="Proteomes" id="UP000000805">
    <property type="component" value="Chromosome"/>
</dbReference>
<dbReference type="GO" id="GO:0005886">
    <property type="term" value="C:plasma membrane"/>
    <property type="evidence" value="ECO:0007669"/>
    <property type="project" value="UniProtKB-SubCell"/>
</dbReference>
<dbReference type="InterPro" id="IPR025098">
    <property type="entry name" value="DUF4013"/>
</dbReference>
<dbReference type="Pfam" id="PF13197">
    <property type="entry name" value="DUF4013"/>
    <property type="match status" value="1"/>
</dbReference>
<organism>
    <name type="scientific">Methanocaldococcus jannaschii (strain ATCC 43067 / DSM 2661 / JAL-1 / JCM 10045 / NBRC 100440)</name>
    <name type="common">Methanococcus jannaschii</name>
    <dbReference type="NCBI Taxonomy" id="243232"/>
    <lineage>
        <taxon>Archaea</taxon>
        <taxon>Methanobacteriati</taxon>
        <taxon>Methanobacteriota</taxon>
        <taxon>Methanomada group</taxon>
        <taxon>Methanococci</taxon>
        <taxon>Methanococcales</taxon>
        <taxon>Methanocaldococcaceae</taxon>
        <taxon>Methanocaldococcus</taxon>
    </lineage>
</organism>
<feature type="chain" id="PRO_0000106753" description="Uncharacterized protein MJ0233">
    <location>
        <begin position="1"/>
        <end position="277"/>
    </location>
</feature>
<feature type="transmembrane region" description="Helical" evidence="1">
    <location>
        <begin position="23"/>
        <end position="43"/>
    </location>
</feature>
<feature type="transmembrane region" description="Helical" evidence="1">
    <location>
        <begin position="61"/>
        <end position="81"/>
    </location>
</feature>
<feature type="transmembrane region" description="Helical" evidence="1">
    <location>
        <begin position="117"/>
        <end position="137"/>
    </location>
</feature>
<feature type="transmembrane region" description="Helical" evidence="1">
    <location>
        <begin position="144"/>
        <end position="164"/>
    </location>
</feature>
<feature type="transmembrane region" description="Helical" evidence="1">
    <location>
        <begin position="197"/>
        <end position="217"/>
    </location>
</feature>
<feature type="transmembrane region" description="Helical" evidence="1">
    <location>
        <begin position="221"/>
        <end position="241"/>
    </location>
</feature>
<feature type="transmembrane region" description="Helical" evidence="1">
    <location>
        <begin position="243"/>
        <end position="263"/>
    </location>
</feature>
<sequence>MGTIESYLTNSYNYIIFNFKKLCIGGLMSAIVGAMSGVTTAFIDLFMERANYDIMHIIMSFLIYFGIIFIIGLIVSAIIGGYNVRIMKTTVEGLNVAPDWNNITDLLYRGILYIVGLVLLNIIFYFIPAILFVFGIFSLYISKIIGAFLIIISILIFIISVISLWLYSKLAEVNYSVKGFYGFFEFKEIFKMIGIRYIILVIIIAIINFIISLIVVLPLNIIDIFISYSALANSILTIIYISIKGISYALSTFVDFYLGVFSIRAVALYYKDRKGIT</sequence>
<proteinExistence type="predicted"/>
<keyword id="KW-1003">Cell membrane</keyword>
<keyword id="KW-0472">Membrane</keyword>
<keyword id="KW-1185">Reference proteome</keyword>
<keyword id="KW-0812">Transmembrane</keyword>
<keyword id="KW-1133">Transmembrane helix</keyword>
<reference key="1">
    <citation type="journal article" date="1996" name="Science">
        <title>Complete genome sequence of the methanogenic archaeon, Methanococcus jannaschii.</title>
        <authorList>
            <person name="Bult C.J."/>
            <person name="White O."/>
            <person name="Olsen G.J."/>
            <person name="Zhou L."/>
            <person name="Fleischmann R.D."/>
            <person name="Sutton G.G."/>
            <person name="Blake J.A."/>
            <person name="FitzGerald L.M."/>
            <person name="Clayton R.A."/>
            <person name="Gocayne J.D."/>
            <person name="Kerlavage A.R."/>
            <person name="Dougherty B.A."/>
            <person name="Tomb J.-F."/>
            <person name="Adams M.D."/>
            <person name="Reich C.I."/>
            <person name="Overbeek R."/>
            <person name="Kirkness E.F."/>
            <person name="Weinstock K.G."/>
            <person name="Merrick J.M."/>
            <person name="Glodek A."/>
            <person name="Scott J.L."/>
            <person name="Geoghagen N.S.M."/>
            <person name="Weidman J.F."/>
            <person name="Fuhrmann J.L."/>
            <person name="Nguyen D."/>
            <person name="Utterback T.R."/>
            <person name="Kelley J.M."/>
            <person name="Peterson J.D."/>
            <person name="Sadow P.W."/>
            <person name="Hanna M.C."/>
            <person name="Cotton M.D."/>
            <person name="Roberts K.M."/>
            <person name="Hurst M.A."/>
            <person name="Kaine B.P."/>
            <person name="Borodovsky M."/>
            <person name="Klenk H.-P."/>
            <person name="Fraser C.M."/>
            <person name="Smith H.O."/>
            <person name="Woese C.R."/>
            <person name="Venter J.C."/>
        </authorList>
    </citation>
    <scope>NUCLEOTIDE SEQUENCE [LARGE SCALE GENOMIC DNA]</scope>
    <source>
        <strain>ATCC 43067 / DSM 2661 / JAL-1 / JCM 10045 / NBRC 100440</strain>
    </source>
</reference>